<dbReference type="EC" id="4.1.1.48" evidence="1"/>
<dbReference type="EMBL" id="BA000011">
    <property type="protein sequence ID" value="BAB60193.1"/>
    <property type="molecule type" value="Genomic_DNA"/>
</dbReference>
<dbReference type="RefSeq" id="WP_010917280.1">
    <property type="nucleotide sequence ID" value="NC_002689.2"/>
</dbReference>
<dbReference type="SMR" id="Q979V9"/>
<dbReference type="STRING" id="273116.gene:9381845"/>
<dbReference type="PaxDb" id="273116-14325289"/>
<dbReference type="GeneID" id="1441162"/>
<dbReference type="KEGG" id="tvo:TVG1077942"/>
<dbReference type="eggNOG" id="arCOG01088">
    <property type="taxonomic scope" value="Archaea"/>
</dbReference>
<dbReference type="HOGENOM" id="CLU_034247_0_1_2"/>
<dbReference type="OrthoDB" id="15223at2157"/>
<dbReference type="PhylomeDB" id="Q979V9"/>
<dbReference type="UniPathway" id="UPA00035">
    <property type="reaction ID" value="UER00043"/>
</dbReference>
<dbReference type="Proteomes" id="UP000001017">
    <property type="component" value="Chromosome"/>
</dbReference>
<dbReference type="GO" id="GO:0004425">
    <property type="term" value="F:indole-3-glycerol-phosphate synthase activity"/>
    <property type="evidence" value="ECO:0007669"/>
    <property type="project" value="UniProtKB-UniRule"/>
</dbReference>
<dbReference type="GO" id="GO:0004640">
    <property type="term" value="F:phosphoribosylanthranilate isomerase activity"/>
    <property type="evidence" value="ECO:0007669"/>
    <property type="project" value="TreeGrafter"/>
</dbReference>
<dbReference type="GO" id="GO:0000162">
    <property type="term" value="P:L-tryptophan biosynthetic process"/>
    <property type="evidence" value="ECO:0007669"/>
    <property type="project" value="UniProtKB-UniRule"/>
</dbReference>
<dbReference type="CDD" id="cd00331">
    <property type="entry name" value="IGPS"/>
    <property type="match status" value="1"/>
</dbReference>
<dbReference type="Gene3D" id="3.20.20.70">
    <property type="entry name" value="Aldolase class I"/>
    <property type="match status" value="1"/>
</dbReference>
<dbReference type="HAMAP" id="MF_00134_A">
    <property type="entry name" value="IGPS_A"/>
    <property type="match status" value="1"/>
</dbReference>
<dbReference type="InterPro" id="IPR013785">
    <property type="entry name" value="Aldolase_TIM"/>
</dbReference>
<dbReference type="InterPro" id="IPR045186">
    <property type="entry name" value="Indole-3-glycerol_P_synth"/>
</dbReference>
<dbReference type="InterPro" id="IPR013798">
    <property type="entry name" value="Indole-3-glycerol_P_synth_dom"/>
</dbReference>
<dbReference type="InterPro" id="IPR001468">
    <property type="entry name" value="Indole-3-GlycerolPSynthase_CS"/>
</dbReference>
<dbReference type="InterPro" id="IPR011060">
    <property type="entry name" value="RibuloseP-bd_barrel"/>
</dbReference>
<dbReference type="NCBIfam" id="NF001374">
    <property type="entry name" value="PRK00278.2-1"/>
    <property type="match status" value="1"/>
</dbReference>
<dbReference type="PANTHER" id="PTHR22854:SF2">
    <property type="entry name" value="INDOLE-3-GLYCEROL-PHOSPHATE SYNTHASE"/>
    <property type="match status" value="1"/>
</dbReference>
<dbReference type="PANTHER" id="PTHR22854">
    <property type="entry name" value="TRYPTOPHAN BIOSYNTHESIS PROTEIN"/>
    <property type="match status" value="1"/>
</dbReference>
<dbReference type="Pfam" id="PF00218">
    <property type="entry name" value="IGPS"/>
    <property type="match status" value="1"/>
</dbReference>
<dbReference type="SUPFAM" id="SSF51366">
    <property type="entry name" value="Ribulose-phoshate binding barrel"/>
    <property type="match status" value="1"/>
</dbReference>
<dbReference type="PROSITE" id="PS00614">
    <property type="entry name" value="IGPS"/>
    <property type="match status" value="1"/>
</dbReference>
<keyword id="KW-0028">Amino-acid biosynthesis</keyword>
<keyword id="KW-0057">Aromatic amino acid biosynthesis</keyword>
<keyword id="KW-0210">Decarboxylase</keyword>
<keyword id="KW-0456">Lyase</keyword>
<keyword id="KW-0822">Tryptophan biosynthesis</keyword>
<evidence type="ECO:0000255" key="1">
    <source>
        <dbReference type="HAMAP-Rule" id="MF_00134"/>
    </source>
</evidence>
<sequence>MNYDSVYKSNKLRSFPYSRRRGIISLKERIIELNRSGKRGVIAEYKRRSPSGLKVDYSIEDYLSYVMEHRIAGLSILTEPSFFNGSFQDVVVAHRYNIPILVKDFVPDSEFVDYGFNAGGDAVLVILDFLDYESIKRIVERAADLGMDVLEEFHNQDALKRQYIRDNVMIGYNRRDLTNLLMDEKIPDFSGEVRILESGISIDNVKNLDLKFQGYLIGTSILKKDGTLEYLEMEGII</sequence>
<protein>
    <recommendedName>
        <fullName evidence="1">Indole-3-glycerol phosphate synthase</fullName>
        <shortName evidence="1">IGPS</shortName>
        <ecNumber evidence="1">4.1.1.48</ecNumber>
    </recommendedName>
</protein>
<name>TRPC_THEVO</name>
<reference key="1">
    <citation type="journal article" date="2000" name="Proc. Natl. Acad. Sci. U.S.A.">
        <title>Archaeal adaptation to higher temperatures revealed by genomic sequence of Thermoplasma volcanium.</title>
        <authorList>
            <person name="Kawashima T."/>
            <person name="Amano N."/>
            <person name="Koike H."/>
            <person name="Makino S."/>
            <person name="Higuchi S."/>
            <person name="Kawashima-Ohya Y."/>
            <person name="Watanabe K."/>
            <person name="Yamazaki M."/>
            <person name="Kanehori K."/>
            <person name="Kawamoto T."/>
            <person name="Nunoshiba T."/>
            <person name="Yamamoto Y."/>
            <person name="Aramaki H."/>
            <person name="Makino K."/>
            <person name="Suzuki M."/>
        </authorList>
    </citation>
    <scope>NUCLEOTIDE SEQUENCE [LARGE SCALE GENOMIC DNA]</scope>
    <source>
        <strain>ATCC 51530 / DSM 4299 / JCM 9571 / NBRC 15438 / GSS1</strain>
    </source>
</reference>
<feature type="chain" id="PRO_0000154305" description="Indole-3-glycerol phosphate synthase">
    <location>
        <begin position="1"/>
        <end position="237"/>
    </location>
</feature>
<proteinExistence type="inferred from homology"/>
<organism>
    <name type="scientific">Thermoplasma volcanium (strain ATCC 51530 / DSM 4299 / JCM 9571 / NBRC 15438 / GSS1)</name>
    <dbReference type="NCBI Taxonomy" id="273116"/>
    <lineage>
        <taxon>Archaea</taxon>
        <taxon>Methanobacteriati</taxon>
        <taxon>Thermoplasmatota</taxon>
        <taxon>Thermoplasmata</taxon>
        <taxon>Thermoplasmatales</taxon>
        <taxon>Thermoplasmataceae</taxon>
        <taxon>Thermoplasma</taxon>
    </lineage>
</organism>
<gene>
    <name evidence="1" type="primary">trpC</name>
    <name type="ordered locus">TV1051</name>
    <name type="ORF">TVG1077942</name>
</gene>
<comment type="catalytic activity">
    <reaction evidence="1">
        <text>1-(2-carboxyphenylamino)-1-deoxy-D-ribulose 5-phosphate + H(+) = (1S,2R)-1-C-(indol-3-yl)glycerol 3-phosphate + CO2 + H2O</text>
        <dbReference type="Rhea" id="RHEA:23476"/>
        <dbReference type="ChEBI" id="CHEBI:15377"/>
        <dbReference type="ChEBI" id="CHEBI:15378"/>
        <dbReference type="ChEBI" id="CHEBI:16526"/>
        <dbReference type="ChEBI" id="CHEBI:58613"/>
        <dbReference type="ChEBI" id="CHEBI:58866"/>
        <dbReference type="EC" id="4.1.1.48"/>
    </reaction>
</comment>
<comment type="pathway">
    <text evidence="1">Amino-acid biosynthesis; L-tryptophan biosynthesis; L-tryptophan from chorismate: step 4/5.</text>
</comment>
<comment type="similarity">
    <text evidence="1">Belongs to the TrpC family.</text>
</comment>
<accession>Q979V9</accession>